<feature type="transit peptide" description="Mitochondrion" evidence="1">
    <location>
        <begin position="1"/>
        <end position="43"/>
    </location>
</feature>
<feature type="chain" id="PRO_0000001207" description="Glycine amidinotransferase, mitochondrial">
    <location>
        <begin position="44"/>
        <end position="423"/>
    </location>
</feature>
<feature type="active site" evidence="2">
    <location>
        <position position="254"/>
    </location>
</feature>
<feature type="active site" evidence="2">
    <location>
        <position position="303"/>
    </location>
</feature>
<feature type="active site" description="Amidino-cysteine intermediate" evidence="2">
    <location>
        <position position="407"/>
    </location>
</feature>
<feature type="binding site" evidence="2">
    <location>
        <position position="170"/>
    </location>
    <ligand>
        <name>arginine</name>
        <dbReference type="ChEBI" id="CHEBI:32696"/>
    </ligand>
</feature>
<feature type="binding site" evidence="2">
    <location>
        <position position="305"/>
    </location>
    <ligand>
        <name>arginine</name>
        <dbReference type="ChEBI" id="CHEBI:32696"/>
    </ligand>
</feature>
<feature type="binding site" evidence="2">
    <location>
        <position position="322"/>
    </location>
    <ligand>
        <name>arginine</name>
        <dbReference type="ChEBI" id="CHEBI:32696"/>
    </ligand>
</feature>
<feature type="binding site" evidence="2">
    <location>
        <position position="354"/>
    </location>
    <ligand>
        <name>arginine</name>
        <dbReference type="ChEBI" id="CHEBI:32696"/>
    </ligand>
</feature>
<feature type="binding site" evidence="2">
    <location>
        <position position="355"/>
    </location>
    <ligand>
        <name>arginine</name>
        <dbReference type="ChEBI" id="CHEBI:32696"/>
    </ligand>
</feature>
<feature type="modified residue" description="Phosphoserine" evidence="2">
    <location>
        <position position="46"/>
    </location>
</feature>
<feature type="modified residue" description="Phosphoserine" evidence="2">
    <location>
        <position position="49"/>
    </location>
</feature>
<feature type="modified residue" description="N6-acetyllysine" evidence="2">
    <location>
        <position position="385"/>
    </location>
</feature>
<feature type="sequence conflict" description="In Ref. 1; BAE26862." evidence="5" ref="1">
    <original>L</original>
    <variation>M</variation>
    <location>
        <position position="172"/>
    </location>
</feature>
<feature type="sequence conflict" description="In Ref. 1; BAE30294." evidence="5" ref="1">
    <original>F</original>
    <variation>Y</variation>
    <location>
        <position position="258"/>
    </location>
</feature>
<protein>
    <recommendedName>
        <fullName>Glycine amidinotransferase, mitochondrial</fullName>
        <ecNumber evidence="2">2.1.4.1</ecNumber>
    </recommendedName>
    <alternativeName>
        <fullName>L-arginine:glycine amidinotransferase</fullName>
    </alternativeName>
    <alternativeName>
        <fullName>Transamidinase</fullName>
    </alternativeName>
</protein>
<keyword id="KW-0007">Acetylation</keyword>
<keyword id="KW-0472">Membrane</keyword>
<keyword id="KW-0496">Mitochondrion</keyword>
<keyword id="KW-0999">Mitochondrion inner membrane</keyword>
<keyword id="KW-0597">Phosphoprotein</keyword>
<keyword id="KW-1185">Reference proteome</keyword>
<keyword id="KW-0808">Transferase</keyword>
<keyword id="KW-0809">Transit peptide</keyword>
<reference key="1">
    <citation type="journal article" date="2005" name="Science">
        <title>The transcriptional landscape of the mammalian genome.</title>
        <authorList>
            <person name="Carninci P."/>
            <person name="Kasukawa T."/>
            <person name="Katayama S."/>
            <person name="Gough J."/>
            <person name="Frith M.C."/>
            <person name="Maeda N."/>
            <person name="Oyama R."/>
            <person name="Ravasi T."/>
            <person name="Lenhard B."/>
            <person name="Wells C."/>
            <person name="Kodzius R."/>
            <person name="Shimokawa K."/>
            <person name="Bajic V.B."/>
            <person name="Brenner S.E."/>
            <person name="Batalov S."/>
            <person name="Forrest A.R."/>
            <person name="Zavolan M."/>
            <person name="Davis M.J."/>
            <person name="Wilming L.G."/>
            <person name="Aidinis V."/>
            <person name="Allen J.E."/>
            <person name="Ambesi-Impiombato A."/>
            <person name="Apweiler R."/>
            <person name="Aturaliya R.N."/>
            <person name="Bailey T.L."/>
            <person name="Bansal M."/>
            <person name="Baxter L."/>
            <person name="Beisel K.W."/>
            <person name="Bersano T."/>
            <person name="Bono H."/>
            <person name="Chalk A.M."/>
            <person name="Chiu K.P."/>
            <person name="Choudhary V."/>
            <person name="Christoffels A."/>
            <person name="Clutterbuck D.R."/>
            <person name="Crowe M.L."/>
            <person name="Dalla E."/>
            <person name="Dalrymple B.P."/>
            <person name="de Bono B."/>
            <person name="Della Gatta G."/>
            <person name="di Bernardo D."/>
            <person name="Down T."/>
            <person name="Engstrom P."/>
            <person name="Fagiolini M."/>
            <person name="Faulkner G."/>
            <person name="Fletcher C.F."/>
            <person name="Fukushima T."/>
            <person name="Furuno M."/>
            <person name="Futaki S."/>
            <person name="Gariboldi M."/>
            <person name="Georgii-Hemming P."/>
            <person name="Gingeras T.R."/>
            <person name="Gojobori T."/>
            <person name="Green R.E."/>
            <person name="Gustincich S."/>
            <person name="Harbers M."/>
            <person name="Hayashi Y."/>
            <person name="Hensch T.K."/>
            <person name="Hirokawa N."/>
            <person name="Hill D."/>
            <person name="Huminiecki L."/>
            <person name="Iacono M."/>
            <person name="Ikeo K."/>
            <person name="Iwama A."/>
            <person name="Ishikawa T."/>
            <person name="Jakt M."/>
            <person name="Kanapin A."/>
            <person name="Katoh M."/>
            <person name="Kawasawa Y."/>
            <person name="Kelso J."/>
            <person name="Kitamura H."/>
            <person name="Kitano H."/>
            <person name="Kollias G."/>
            <person name="Krishnan S.P."/>
            <person name="Kruger A."/>
            <person name="Kummerfeld S.K."/>
            <person name="Kurochkin I.V."/>
            <person name="Lareau L.F."/>
            <person name="Lazarevic D."/>
            <person name="Lipovich L."/>
            <person name="Liu J."/>
            <person name="Liuni S."/>
            <person name="McWilliam S."/>
            <person name="Madan Babu M."/>
            <person name="Madera M."/>
            <person name="Marchionni L."/>
            <person name="Matsuda H."/>
            <person name="Matsuzawa S."/>
            <person name="Miki H."/>
            <person name="Mignone F."/>
            <person name="Miyake S."/>
            <person name="Morris K."/>
            <person name="Mottagui-Tabar S."/>
            <person name="Mulder N."/>
            <person name="Nakano N."/>
            <person name="Nakauchi H."/>
            <person name="Ng P."/>
            <person name="Nilsson R."/>
            <person name="Nishiguchi S."/>
            <person name="Nishikawa S."/>
            <person name="Nori F."/>
            <person name="Ohara O."/>
            <person name="Okazaki Y."/>
            <person name="Orlando V."/>
            <person name="Pang K.C."/>
            <person name="Pavan W.J."/>
            <person name="Pavesi G."/>
            <person name="Pesole G."/>
            <person name="Petrovsky N."/>
            <person name="Piazza S."/>
            <person name="Reed J."/>
            <person name="Reid J.F."/>
            <person name="Ring B.Z."/>
            <person name="Ringwald M."/>
            <person name="Rost B."/>
            <person name="Ruan Y."/>
            <person name="Salzberg S.L."/>
            <person name="Sandelin A."/>
            <person name="Schneider C."/>
            <person name="Schoenbach C."/>
            <person name="Sekiguchi K."/>
            <person name="Semple C.A."/>
            <person name="Seno S."/>
            <person name="Sessa L."/>
            <person name="Sheng Y."/>
            <person name="Shibata Y."/>
            <person name="Shimada H."/>
            <person name="Shimada K."/>
            <person name="Silva D."/>
            <person name="Sinclair B."/>
            <person name="Sperling S."/>
            <person name="Stupka E."/>
            <person name="Sugiura K."/>
            <person name="Sultana R."/>
            <person name="Takenaka Y."/>
            <person name="Taki K."/>
            <person name="Tammoja K."/>
            <person name="Tan S.L."/>
            <person name="Tang S."/>
            <person name="Taylor M.S."/>
            <person name="Tegner J."/>
            <person name="Teichmann S.A."/>
            <person name="Ueda H.R."/>
            <person name="van Nimwegen E."/>
            <person name="Verardo R."/>
            <person name="Wei C.L."/>
            <person name="Yagi K."/>
            <person name="Yamanishi H."/>
            <person name="Zabarovsky E."/>
            <person name="Zhu S."/>
            <person name="Zimmer A."/>
            <person name="Hide W."/>
            <person name="Bult C."/>
            <person name="Grimmond S.M."/>
            <person name="Teasdale R.D."/>
            <person name="Liu E.T."/>
            <person name="Brusic V."/>
            <person name="Quackenbush J."/>
            <person name="Wahlestedt C."/>
            <person name="Mattick J.S."/>
            <person name="Hume D.A."/>
            <person name="Kai C."/>
            <person name="Sasaki D."/>
            <person name="Tomaru Y."/>
            <person name="Fukuda S."/>
            <person name="Kanamori-Katayama M."/>
            <person name="Suzuki M."/>
            <person name="Aoki J."/>
            <person name="Arakawa T."/>
            <person name="Iida J."/>
            <person name="Imamura K."/>
            <person name="Itoh M."/>
            <person name="Kato T."/>
            <person name="Kawaji H."/>
            <person name="Kawagashira N."/>
            <person name="Kawashima T."/>
            <person name="Kojima M."/>
            <person name="Kondo S."/>
            <person name="Konno H."/>
            <person name="Nakano K."/>
            <person name="Ninomiya N."/>
            <person name="Nishio T."/>
            <person name="Okada M."/>
            <person name="Plessy C."/>
            <person name="Shibata K."/>
            <person name="Shiraki T."/>
            <person name="Suzuki S."/>
            <person name="Tagami M."/>
            <person name="Waki K."/>
            <person name="Watahiki A."/>
            <person name="Okamura-Oho Y."/>
            <person name="Suzuki H."/>
            <person name="Kawai J."/>
            <person name="Hayashizaki Y."/>
        </authorList>
    </citation>
    <scope>NUCLEOTIDE SEQUENCE [LARGE SCALE MRNA]</scope>
    <source>
        <strain>C57BL/6J</strain>
        <tissue>Bone marrow macrophage</tissue>
        <tissue>Pancreas</tissue>
        <tissue>Placenta</tissue>
    </source>
</reference>
<reference key="2">
    <citation type="journal article" date="2009" name="PLoS Biol.">
        <title>Lineage-specific biology revealed by a finished genome assembly of the mouse.</title>
        <authorList>
            <person name="Church D.M."/>
            <person name="Goodstadt L."/>
            <person name="Hillier L.W."/>
            <person name="Zody M.C."/>
            <person name="Goldstein S."/>
            <person name="She X."/>
            <person name="Bult C.J."/>
            <person name="Agarwala R."/>
            <person name="Cherry J.L."/>
            <person name="DiCuccio M."/>
            <person name="Hlavina W."/>
            <person name="Kapustin Y."/>
            <person name="Meric P."/>
            <person name="Maglott D."/>
            <person name="Birtle Z."/>
            <person name="Marques A.C."/>
            <person name="Graves T."/>
            <person name="Zhou S."/>
            <person name="Teague B."/>
            <person name="Potamousis K."/>
            <person name="Churas C."/>
            <person name="Place M."/>
            <person name="Herschleb J."/>
            <person name="Runnheim R."/>
            <person name="Forrest D."/>
            <person name="Amos-Landgraf J."/>
            <person name="Schwartz D.C."/>
            <person name="Cheng Z."/>
            <person name="Lindblad-Toh K."/>
            <person name="Eichler E.E."/>
            <person name="Ponting C.P."/>
        </authorList>
    </citation>
    <scope>NUCLEOTIDE SEQUENCE [LARGE SCALE GENOMIC DNA]</scope>
    <source>
        <strain>C57BL/6J</strain>
    </source>
</reference>
<reference key="3">
    <citation type="submission" date="2005-07" db="EMBL/GenBank/DDBJ databases">
        <authorList>
            <person name="Mural R.J."/>
            <person name="Adams M.D."/>
            <person name="Myers E.W."/>
            <person name="Smith H.O."/>
            <person name="Venter J.C."/>
        </authorList>
    </citation>
    <scope>NUCLEOTIDE SEQUENCE [LARGE SCALE GENOMIC DNA]</scope>
</reference>
<reference key="4">
    <citation type="journal article" date="2004" name="Genome Res.">
        <title>The status, quality, and expansion of the NIH full-length cDNA project: the Mammalian Gene Collection (MGC).</title>
        <authorList>
            <consortium name="The MGC Project Team"/>
        </authorList>
    </citation>
    <scope>NUCLEOTIDE SEQUENCE [LARGE SCALE MRNA]</scope>
    <source>
        <tissue>Mammary tumor</tissue>
    </source>
</reference>
<reference key="5">
    <citation type="submission" date="2004-05" db="EMBL/GenBank/DDBJ databases">
        <title>The comparative cDNA sequences of some mammalian kidney L-arginine:glycine amidinotransferase genes and their evolutionary significance.</title>
        <authorList>
            <person name="Zink R.M."/>
            <person name="Westberg M.C."/>
            <person name="Van Pilsum J.F."/>
        </authorList>
    </citation>
    <scope>NUCLEOTIDE SEQUENCE [MRNA] OF 120-358</scope>
</reference>
<reference key="6">
    <citation type="journal article" date="2003" name="Proc. Natl. Acad. Sci. U.S.A.">
        <title>Gatm, a creatine synthesis enzyme, is imprinted in mouse placenta.</title>
        <authorList>
            <person name="Sandell L.L."/>
            <person name="Guan X.J."/>
            <person name="Ingram R."/>
            <person name="Tilghman S.M."/>
        </authorList>
    </citation>
    <scope>TISSUE SPECIFICITY</scope>
    <scope>DEVELOPMENTAL STAGE</scope>
</reference>
<reference key="7">
    <citation type="journal article" date="2010" name="Cell">
        <title>A tissue-specific atlas of mouse protein phosphorylation and expression.</title>
        <authorList>
            <person name="Huttlin E.L."/>
            <person name="Jedrychowski M.P."/>
            <person name="Elias J.E."/>
            <person name="Goswami T."/>
            <person name="Rad R."/>
            <person name="Beausoleil S.A."/>
            <person name="Villen J."/>
            <person name="Haas W."/>
            <person name="Sowa M.E."/>
            <person name="Gygi S.P."/>
        </authorList>
    </citation>
    <scope>IDENTIFICATION BY MASS SPECTROMETRY [LARGE SCALE ANALYSIS]</scope>
    <source>
        <tissue>Heart</tissue>
        <tissue>Kidney</tissue>
        <tissue>Liver</tissue>
        <tissue>Pancreas</tissue>
        <tissue>Spleen</tissue>
        <tissue>Testis</tissue>
    </source>
</reference>
<reference key="8">
    <citation type="journal article" date="2018" name="J. Am. Soc. Nephrol.">
        <title>Glycine amidinotransferase (GATM), renal Fanconi syndrome, and kidney failure.</title>
        <authorList>
            <person name="Reichold M."/>
            <person name="Klootwijk E.D."/>
            <person name="Reinders J."/>
            <person name="Otto E.A."/>
            <person name="Milani M."/>
            <person name="Broeker C."/>
            <person name="Laing C."/>
            <person name="Wiesner J."/>
            <person name="Devi S."/>
            <person name="Zhou W."/>
            <person name="Schmitt R."/>
            <person name="Tegtmeier I."/>
            <person name="Sterner C."/>
            <person name="Doellerer H."/>
            <person name="Renner K."/>
            <person name="Oefner P.J."/>
            <person name="Dettmer K."/>
            <person name="Simbuerger J.M."/>
            <person name="Witzgall R."/>
            <person name="Stanescu H.C."/>
            <person name="Dumitriu S."/>
            <person name="Iancu D."/>
            <person name="Patel V."/>
            <person name="Mozere M."/>
            <person name="Tekman M."/>
            <person name="Jaureguiberry G."/>
            <person name="Issler N."/>
            <person name="Kesselheim A."/>
            <person name="Walsh S.B."/>
            <person name="Gale D.P."/>
            <person name="Howie A.J."/>
            <person name="Martins J.R."/>
            <person name="Hall A.M."/>
            <person name="Kasgharian M."/>
            <person name="O'Brien K."/>
            <person name="Ferreira C.R."/>
            <person name="Atwal P.S."/>
            <person name="Jain M."/>
            <person name="Hammers A."/>
            <person name="Charles-Edwards G."/>
            <person name="Choe C.U."/>
            <person name="Isbrandt D."/>
            <person name="Cebrian-Serrano A."/>
            <person name="Davies B."/>
            <person name="Sandford R.N."/>
            <person name="Pugh C."/>
            <person name="Konecki D.S."/>
            <person name="Povey S."/>
            <person name="Bockenhauer D."/>
            <person name="Lichter-Konecki U."/>
            <person name="Gahl W.A."/>
            <person name="Unwin R.J."/>
            <person name="Warth R."/>
            <person name="Kleta R."/>
        </authorList>
    </citation>
    <scope>DISRUPTION PHENOTYPE</scope>
</reference>
<name>GATM_MOUSE</name>
<evidence type="ECO:0000250" key="1"/>
<evidence type="ECO:0000250" key="2">
    <source>
        <dbReference type="UniProtKB" id="P50440"/>
    </source>
</evidence>
<evidence type="ECO:0000269" key="3">
    <source>
    </source>
</evidence>
<evidence type="ECO:0000269" key="4">
    <source>
    </source>
</evidence>
<evidence type="ECO:0000305" key="5"/>
<accession>Q9D964</accession>
<accession>A2AK36</accession>
<accession>Q3U8U4</accession>
<accession>Q3UAM0</accession>
<accession>Q3UKD9</accession>
<accession>Q6IU01</accession>
<dbReference type="EC" id="2.1.4.1" evidence="2"/>
<dbReference type="EMBL" id="AK007325">
    <property type="protein sequence ID" value="BAB24960.1"/>
    <property type="molecule type" value="mRNA"/>
</dbReference>
<dbReference type="EMBL" id="AK146052">
    <property type="protein sequence ID" value="BAE26862.1"/>
    <property type="molecule type" value="mRNA"/>
</dbReference>
<dbReference type="EMBL" id="AK146111">
    <property type="protein sequence ID" value="BAE26909.1"/>
    <property type="molecule type" value="mRNA"/>
</dbReference>
<dbReference type="EMBL" id="AK151313">
    <property type="protein sequence ID" value="BAE30294.1"/>
    <property type="molecule type" value="mRNA"/>
</dbReference>
<dbReference type="EMBL" id="AK152069">
    <property type="protein sequence ID" value="BAE30923.1"/>
    <property type="molecule type" value="mRNA"/>
</dbReference>
<dbReference type="EMBL" id="AL772253">
    <property type="status" value="NOT_ANNOTATED_CDS"/>
    <property type="molecule type" value="Genomic_DNA"/>
</dbReference>
<dbReference type="EMBL" id="CH466519">
    <property type="protein sequence ID" value="EDL28104.1"/>
    <property type="molecule type" value="Genomic_DNA"/>
</dbReference>
<dbReference type="EMBL" id="BC003879">
    <property type="protein sequence ID" value="AAH03879.1"/>
    <property type="molecule type" value="mRNA"/>
</dbReference>
<dbReference type="EMBL" id="AY625267">
    <property type="protein sequence ID" value="AAT39893.1"/>
    <property type="molecule type" value="mRNA"/>
</dbReference>
<dbReference type="CCDS" id="CCDS16665.1"/>
<dbReference type="RefSeq" id="NP_080237.1">
    <property type="nucleotide sequence ID" value="NM_025961.5"/>
</dbReference>
<dbReference type="SMR" id="Q9D964"/>
<dbReference type="BioGRID" id="211934">
    <property type="interactions" value="2"/>
</dbReference>
<dbReference type="FunCoup" id="Q9D964">
    <property type="interactions" value="696"/>
</dbReference>
<dbReference type="IntAct" id="Q9D964">
    <property type="interactions" value="1"/>
</dbReference>
<dbReference type="STRING" id="10090.ENSMUSP00000028624"/>
<dbReference type="iPTMnet" id="Q9D964"/>
<dbReference type="PhosphoSitePlus" id="Q9D964"/>
<dbReference type="SwissPalm" id="Q9D964"/>
<dbReference type="REPRODUCTION-2DPAGE" id="IPI00112129"/>
<dbReference type="jPOST" id="Q9D964"/>
<dbReference type="PaxDb" id="10090-ENSMUSP00000028624"/>
<dbReference type="PeptideAtlas" id="Q9D964"/>
<dbReference type="ProteomicsDB" id="272934"/>
<dbReference type="Antibodypedia" id="11803">
    <property type="antibodies" value="339 antibodies from 28 providers"/>
</dbReference>
<dbReference type="DNASU" id="67092"/>
<dbReference type="Ensembl" id="ENSMUST00000028624.9">
    <property type="protein sequence ID" value="ENSMUSP00000028624.9"/>
    <property type="gene ID" value="ENSMUSG00000027199.15"/>
</dbReference>
<dbReference type="GeneID" id="67092"/>
<dbReference type="KEGG" id="mmu:67092"/>
<dbReference type="UCSC" id="uc008maw.2">
    <property type="organism name" value="mouse"/>
</dbReference>
<dbReference type="AGR" id="MGI:1914342"/>
<dbReference type="CTD" id="2628"/>
<dbReference type="MGI" id="MGI:1914342">
    <property type="gene designation" value="Gatm"/>
</dbReference>
<dbReference type="VEuPathDB" id="HostDB:ENSMUSG00000027199"/>
<dbReference type="eggNOG" id="ENOG502QVCA">
    <property type="taxonomic scope" value="Eukaryota"/>
</dbReference>
<dbReference type="GeneTree" id="ENSGT00390000011613"/>
<dbReference type="HOGENOM" id="CLU_047415_1_0_1"/>
<dbReference type="InParanoid" id="Q9D964"/>
<dbReference type="OMA" id="YPIHIDA"/>
<dbReference type="OrthoDB" id="10264242at2759"/>
<dbReference type="PhylomeDB" id="Q9D964"/>
<dbReference type="TreeFam" id="TF300256"/>
<dbReference type="BRENDA" id="2.1.4.1">
    <property type="organism ID" value="3474"/>
</dbReference>
<dbReference type="Reactome" id="R-MMU-71288">
    <property type="pathway name" value="Creatine metabolism"/>
</dbReference>
<dbReference type="UniPathway" id="UPA00104">
    <property type="reaction ID" value="UER00579"/>
</dbReference>
<dbReference type="BioGRID-ORCS" id="67092">
    <property type="hits" value="3 hits in 78 CRISPR screens"/>
</dbReference>
<dbReference type="ChiTaRS" id="Gatm">
    <property type="organism name" value="mouse"/>
</dbReference>
<dbReference type="PRO" id="PR:Q9D964"/>
<dbReference type="Proteomes" id="UP000000589">
    <property type="component" value="Chromosome 2"/>
</dbReference>
<dbReference type="RNAct" id="Q9D964">
    <property type="molecule type" value="protein"/>
</dbReference>
<dbReference type="Bgee" id="ENSMUSG00000027199">
    <property type="expression patterns" value="Expressed in right kidney and 77 other cell types or tissues"/>
</dbReference>
<dbReference type="GO" id="GO:0005743">
    <property type="term" value="C:mitochondrial inner membrane"/>
    <property type="evidence" value="ECO:0007669"/>
    <property type="project" value="UniProtKB-SubCell"/>
</dbReference>
<dbReference type="GO" id="GO:0005758">
    <property type="term" value="C:mitochondrial intermembrane space"/>
    <property type="evidence" value="ECO:0000266"/>
    <property type="project" value="MGI"/>
</dbReference>
<dbReference type="GO" id="GO:0005739">
    <property type="term" value="C:mitochondrion"/>
    <property type="evidence" value="ECO:0007005"/>
    <property type="project" value="MGI"/>
</dbReference>
<dbReference type="GO" id="GO:0015067">
    <property type="term" value="F:amidinotransferase activity"/>
    <property type="evidence" value="ECO:0000250"/>
    <property type="project" value="UniProtKB"/>
</dbReference>
<dbReference type="GO" id="GO:0015068">
    <property type="term" value="F:glycine amidinotransferase activity"/>
    <property type="evidence" value="ECO:0000250"/>
    <property type="project" value="UniProtKB"/>
</dbReference>
<dbReference type="GO" id="GO:0006601">
    <property type="term" value="P:creatine biosynthetic process"/>
    <property type="evidence" value="ECO:0000266"/>
    <property type="project" value="MGI"/>
</dbReference>
<dbReference type="GO" id="GO:0007611">
    <property type="term" value="P:learning or memory"/>
    <property type="evidence" value="ECO:0007669"/>
    <property type="project" value="Ensembl"/>
</dbReference>
<dbReference type="GO" id="GO:0014889">
    <property type="term" value="P:muscle atrophy"/>
    <property type="evidence" value="ECO:0007669"/>
    <property type="project" value="Ensembl"/>
</dbReference>
<dbReference type="GO" id="GO:0120162">
    <property type="term" value="P:positive regulation of cold-induced thermogenesis"/>
    <property type="evidence" value="ECO:0000315"/>
    <property type="project" value="YuBioLab"/>
</dbReference>
<dbReference type="CDD" id="cd21136">
    <property type="entry name" value="amidinotransferase_AGAT-like"/>
    <property type="match status" value="1"/>
</dbReference>
<dbReference type="FunFam" id="3.75.10.10:FF:000005">
    <property type="entry name" value="Glycine amidinotransferase, mitochondrial"/>
    <property type="match status" value="1"/>
</dbReference>
<dbReference type="Gene3D" id="3.75.10.10">
    <property type="entry name" value="L-arginine/glycine Amidinotransferase, Chain A"/>
    <property type="match status" value="1"/>
</dbReference>
<dbReference type="InterPro" id="IPR033195">
    <property type="entry name" value="AmidinoTrfase"/>
</dbReference>
<dbReference type="PANTHER" id="PTHR10488">
    <property type="entry name" value="GLYCINE AMIDINOTRANSFERASE, MITOCHONDRIAL"/>
    <property type="match status" value="1"/>
</dbReference>
<dbReference type="PANTHER" id="PTHR10488:SF1">
    <property type="entry name" value="GLYCINE AMIDINOTRANSFERASE, MITOCHONDRIAL"/>
    <property type="match status" value="1"/>
</dbReference>
<dbReference type="SUPFAM" id="SSF55909">
    <property type="entry name" value="Pentein"/>
    <property type="match status" value="1"/>
</dbReference>
<proteinExistence type="evidence at protein level"/>
<organism>
    <name type="scientific">Mus musculus</name>
    <name type="common">Mouse</name>
    <dbReference type="NCBI Taxonomy" id="10090"/>
    <lineage>
        <taxon>Eukaryota</taxon>
        <taxon>Metazoa</taxon>
        <taxon>Chordata</taxon>
        <taxon>Craniata</taxon>
        <taxon>Vertebrata</taxon>
        <taxon>Euteleostomi</taxon>
        <taxon>Mammalia</taxon>
        <taxon>Eutheria</taxon>
        <taxon>Euarchontoglires</taxon>
        <taxon>Glires</taxon>
        <taxon>Rodentia</taxon>
        <taxon>Myomorpha</taxon>
        <taxon>Muroidea</taxon>
        <taxon>Muridae</taxon>
        <taxon>Murinae</taxon>
        <taxon>Mus</taxon>
        <taxon>Mus</taxon>
    </lineage>
</organism>
<gene>
    <name type="primary">Gatm</name>
</gene>
<comment type="function">
    <text evidence="2">Transamidinase that catalyzes the transfer of the amidino group of L-arginine onto the amino moiety of acceptor metabolites such as glycine, beta-alanine, gamma-aminobutyric acid (GABA) and taurine yielding the corresponding guanidine derivatives (By similarity). Catalyzes the rate-limiting step of creatine biosynthesis, namely the transfer of the amidino group from L-arginine to glycine to generate guanidinoacetate, which is then methylated by GAMT to form creatine. Provides creatine as a source for ATP generation in tissues with high energy demands, in particular skeletal muscle, heart and brain (By similarity).</text>
</comment>
<comment type="catalytic activity">
    <reaction evidence="2">
        <text>L-arginine + glycine = guanidinoacetate + L-ornithine</text>
        <dbReference type="Rhea" id="RHEA:13201"/>
        <dbReference type="ChEBI" id="CHEBI:32682"/>
        <dbReference type="ChEBI" id="CHEBI:46911"/>
        <dbReference type="ChEBI" id="CHEBI:57305"/>
        <dbReference type="ChEBI" id="CHEBI:57742"/>
        <dbReference type="EC" id="2.1.4.1"/>
    </reaction>
    <physiologicalReaction direction="left-to-right" evidence="2">
        <dbReference type="Rhea" id="RHEA:13202"/>
    </physiologicalReaction>
</comment>
<comment type="catalytic activity">
    <reaction evidence="2">
        <text>4-aminobutanoate + L-arginine = 4-guanidinobutanoate + L-ornithine</text>
        <dbReference type="Rhea" id="RHEA:75939"/>
        <dbReference type="ChEBI" id="CHEBI:32682"/>
        <dbReference type="ChEBI" id="CHEBI:46911"/>
        <dbReference type="ChEBI" id="CHEBI:57486"/>
        <dbReference type="ChEBI" id="CHEBI:59888"/>
    </reaction>
    <physiologicalReaction direction="left-to-right" evidence="2">
        <dbReference type="Rhea" id="RHEA:75940"/>
    </physiologicalReaction>
</comment>
<comment type="catalytic activity">
    <reaction evidence="2">
        <text>beta-alanine + L-arginine = 3-guanidinopropanoate + L-ornithine</text>
        <dbReference type="Rhea" id="RHEA:75943"/>
        <dbReference type="ChEBI" id="CHEBI:32682"/>
        <dbReference type="ChEBI" id="CHEBI:46911"/>
        <dbReference type="ChEBI" id="CHEBI:57593"/>
        <dbReference type="ChEBI" id="CHEBI:57966"/>
    </reaction>
    <physiologicalReaction direction="left-to-right" evidence="2">
        <dbReference type="Rhea" id="RHEA:75944"/>
    </physiologicalReaction>
</comment>
<comment type="catalytic activity">
    <reaction evidence="2">
        <text>taurine + L-arginine = taurocyamine + L-ornithine</text>
        <dbReference type="Rhea" id="RHEA:75947"/>
        <dbReference type="ChEBI" id="CHEBI:32682"/>
        <dbReference type="ChEBI" id="CHEBI:46911"/>
        <dbReference type="ChEBI" id="CHEBI:58064"/>
        <dbReference type="ChEBI" id="CHEBI:507393"/>
    </reaction>
    <physiologicalReaction direction="left-to-right" evidence="2">
        <dbReference type="Rhea" id="RHEA:75948"/>
    </physiologicalReaction>
</comment>
<comment type="pathway">
    <text evidence="2">Amine and polyamine biosynthesis; creatine biosynthesis; creatine from L-arginine and glycine: step 1/2.</text>
</comment>
<comment type="subunit">
    <text evidence="2">Homodimer.</text>
</comment>
<comment type="subcellular location">
    <subcellularLocation>
        <location evidence="1">Mitochondrion inner membrane</location>
    </subcellularLocation>
</comment>
<comment type="tissue specificity">
    <text evidence="3">Expressed in kidney, brain, gonads, uterus, and embryonic head, chest and abdomen. Maternally expressed in the placenta and yolk sac of embryos.</text>
</comment>
<comment type="developmental stage">
    <text evidence="3">Expressed in a wide range of extraembryonic and embryonic tissues throughout development. Expressed at relatively low levels in mid-gestation stage embryos, with expression gradually increasing during embryonic development.</text>
</comment>
<comment type="disruption phenotype">
    <text evidence="4">Knockout mice do not manifest aminoaciduria or glucosuria.</text>
</comment>
<comment type="similarity">
    <text evidence="5">Belongs to the amidinotransferase family.</text>
</comment>
<sequence>MLRVRCLRGGSRGAEAVHYIGSRLGGSLTGWVQRTFQSTQAATASSRNSCAAEDKATHPLPKDCPVSSYNEWDPLEEVIVGRAENACVPPFTVEVKANTYEKYWPFYQKNGGLYFPKDHLKKAVAEVEEMCNILSMEGVTVRRPDPIDWSLKYKTPDFESTGLYSAMPRDILMVVGNEIIEAPMAWRSRFFEYRAYRSIIKDYFHRGAKWTTAPKPTMADELYDQNYPIHSVEDRHKLAAQGKFVTTEFEPCFDAADFIRAGRDIFAQRSQVTNYLGIEWMRRHLAPDYRVHIISFKDPNPMHIDATFNIIGPGLVLSNPDRPCHQIDLFKKAGWTIVTPPTPVIPDDHPLWMSSKWLSMNVLMLDEKRVMVDANEVPIQKMFEKLGISTIKVNIRNANSLGGGFHCWTCDVRRRGTLQSYFD</sequence>